<name>FUMC_LEPIC</name>
<comment type="function">
    <text evidence="1">Involved in the TCA cycle. Catalyzes the stereospecific interconversion of fumarate to L-malate.</text>
</comment>
<comment type="catalytic activity">
    <reaction evidence="1">
        <text>(S)-malate = fumarate + H2O</text>
        <dbReference type="Rhea" id="RHEA:12460"/>
        <dbReference type="ChEBI" id="CHEBI:15377"/>
        <dbReference type="ChEBI" id="CHEBI:15589"/>
        <dbReference type="ChEBI" id="CHEBI:29806"/>
        <dbReference type="EC" id="4.2.1.2"/>
    </reaction>
</comment>
<comment type="pathway">
    <text evidence="1">Carbohydrate metabolism; tricarboxylic acid cycle; (S)-malate from fumarate: step 1/1.</text>
</comment>
<comment type="subunit">
    <text evidence="1">Homotetramer.</text>
</comment>
<comment type="subcellular location">
    <subcellularLocation>
        <location evidence="1">Cytoplasm</location>
    </subcellularLocation>
</comment>
<comment type="miscellaneous">
    <text evidence="1">There are 2 substrate-binding sites: the catalytic A site, and the non-catalytic B site that may play a role in the transfer of substrate or product between the active site and the solvent. Alternatively, the B site may bind allosteric effectors.</text>
</comment>
<comment type="similarity">
    <text evidence="1">Belongs to the class-II fumarase/aspartase family. Fumarase subfamily.</text>
</comment>
<gene>
    <name evidence="1" type="primary">fumC</name>
    <name type="ordered locus">LIC_10162</name>
</gene>
<accession>Q72VY3</accession>
<reference key="1">
    <citation type="journal article" date="2004" name="J. Bacteriol.">
        <title>Comparative genomics of two Leptospira interrogans serovars reveals novel insights into physiology and pathogenesis.</title>
        <authorList>
            <person name="Nascimento A.L.T.O."/>
            <person name="Ko A.I."/>
            <person name="Martins E.A.L."/>
            <person name="Monteiro-Vitorello C.B."/>
            <person name="Ho P.L."/>
            <person name="Haake D.A."/>
            <person name="Verjovski-Almeida S."/>
            <person name="Hartskeerl R.A."/>
            <person name="Marques M.V."/>
            <person name="Oliveira M.C."/>
            <person name="Menck C.F.M."/>
            <person name="Leite L.C.C."/>
            <person name="Carrer H."/>
            <person name="Coutinho L.L."/>
            <person name="Degrave W.M."/>
            <person name="Dellagostin O.A."/>
            <person name="El-Dorry H."/>
            <person name="Ferro E.S."/>
            <person name="Ferro M.I.T."/>
            <person name="Furlan L.R."/>
            <person name="Gamberini M."/>
            <person name="Giglioti E.A."/>
            <person name="Goes-Neto A."/>
            <person name="Goldman G.H."/>
            <person name="Goldman M.H.S."/>
            <person name="Harakava R."/>
            <person name="Jeronimo S.M.B."/>
            <person name="Junqueira-de-Azevedo I.L.M."/>
            <person name="Kimura E.T."/>
            <person name="Kuramae E.E."/>
            <person name="Lemos E.G.M."/>
            <person name="Lemos M.V.F."/>
            <person name="Marino C.L."/>
            <person name="Nunes L.R."/>
            <person name="de Oliveira R.C."/>
            <person name="Pereira G.G."/>
            <person name="Reis M.S."/>
            <person name="Schriefer A."/>
            <person name="Siqueira W.J."/>
            <person name="Sommer P."/>
            <person name="Tsai S.M."/>
            <person name="Simpson A.J.G."/>
            <person name="Ferro J.A."/>
            <person name="Camargo L.E.A."/>
            <person name="Kitajima J.P."/>
            <person name="Setubal J.C."/>
            <person name="Van Sluys M.A."/>
        </authorList>
    </citation>
    <scope>NUCLEOTIDE SEQUENCE [LARGE SCALE GENOMIC DNA]</scope>
    <source>
        <strain>Fiocruz L1-130</strain>
    </source>
</reference>
<proteinExistence type="inferred from homology"/>
<sequence length="464" mass="50397">MKTRIETDSMGEIAVDDSKYWGAQTERSLHHFHIGNDRFPREMIRALGILKKSAAVVNAELGLLSEDKKKLIVQAADEVISGKLDEHFPLSVWQTGSGTQTNMNSNEVISNRAIEIAGGVKGSKKPIHPNDDVNKAQSSNDTFPTAMHIAAAEQLNQKLIPALIQLKETFKKKTDEFQNIIKIGRTHLQDATPLTLGQEFSGYVQQLEYNIARVKAVLPSVYRLALGGTAVGTGLNTHPQFAVKAAAQIAKETGLPFVSAENKFEALAAHDSLVETSGVLKTIAASLMKIANDIRWLSSGPRCGIGEISIPENEPGSSIMPGKVNPTQSEQMTMVAAQVIANDVAVNIGGASGNFELNVFKPLIIHNVLNSIRLLSDSCVSFEEHCARGIIPNKEKLNEHLNNSLMLVTALNPHIGYDNAAKIAKNAHKKGTTLKESGIELGLLTSEQFDQWVLPEKMIHPSVD</sequence>
<feature type="chain" id="PRO_0000161282" description="Fumarate hydratase class II">
    <location>
        <begin position="1"/>
        <end position="464"/>
    </location>
</feature>
<feature type="active site" description="Proton donor/acceptor" evidence="1">
    <location>
        <position position="187"/>
    </location>
</feature>
<feature type="active site" evidence="1">
    <location>
        <position position="317"/>
    </location>
</feature>
<feature type="binding site" evidence="1">
    <location>
        <begin position="97"/>
        <end position="99"/>
    </location>
    <ligand>
        <name>substrate</name>
    </ligand>
</feature>
<feature type="binding site" description="in site B" evidence="1">
    <location>
        <begin position="128"/>
        <end position="131"/>
    </location>
    <ligand>
        <name>substrate</name>
    </ligand>
</feature>
<feature type="binding site" evidence="1">
    <location>
        <begin position="138"/>
        <end position="140"/>
    </location>
    <ligand>
        <name>substrate</name>
    </ligand>
</feature>
<feature type="binding site" evidence="1">
    <location>
        <position position="186"/>
    </location>
    <ligand>
        <name>substrate</name>
    </ligand>
</feature>
<feature type="binding site" evidence="1">
    <location>
        <position position="318"/>
    </location>
    <ligand>
        <name>substrate</name>
    </ligand>
</feature>
<feature type="binding site" evidence="1">
    <location>
        <begin position="323"/>
        <end position="325"/>
    </location>
    <ligand>
        <name>substrate</name>
    </ligand>
</feature>
<feature type="site" description="Important for catalytic activity" evidence="1">
    <location>
        <position position="330"/>
    </location>
</feature>
<protein>
    <recommendedName>
        <fullName evidence="1">Fumarate hydratase class II</fullName>
        <shortName evidence="1">Fumarase C</shortName>
        <ecNumber evidence="1">4.2.1.2</ecNumber>
    </recommendedName>
    <alternativeName>
        <fullName evidence="1">Aerobic fumarase</fullName>
    </alternativeName>
    <alternativeName>
        <fullName evidence="1">Iron-independent fumarase</fullName>
    </alternativeName>
</protein>
<keyword id="KW-0963">Cytoplasm</keyword>
<keyword id="KW-0456">Lyase</keyword>
<keyword id="KW-0816">Tricarboxylic acid cycle</keyword>
<evidence type="ECO:0000255" key="1">
    <source>
        <dbReference type="HAMAP-Rule" id="MF_00743"/>
    </source>
</evidence>
<dbReference type="EC" id="4.2.1.2" evidence="1"/>
<dbReference type="EMBL" id="AE016823">
    <property type="protein sequence ID" value="AAS68791.1"/>
    <property type="molecule type" value="Genomic_DNA"/>
</dbReference>
<dbReference type="RefSeq" id="WP_000857390.1">
    <property type="nucleotide sequence ID" value="NC_005823.1"/>
</dbReference>
<dbReference type="SMR" id="Q72VY3"/>
<dbReference type="GeneID" id="61143516"/>
<dbReference type="KEGG" id="lic:LIC_10162"/>
<dbReference type="HOGENOM" id="CLU_021594_4_1_12"/>
<dbReference type="UniPathway" id="UPA00223">
    <property type="reaction ID" value="UER01007"/>
</dbReference>
<dbReference type="Proteomes" id="UP000007037">
    <property type="component" value="Chromosome I"/>
</dbReference>
<dbReference type="GO" id="GO:0005737">
    <property type="term" value="C:cytoplasm"/>
    <property type="evidence" value="ECO:0007669"/>
    <property type="project" value="UniProtKB-SubCell"/>
</dbReference>
<dbReference type="GO" id="GO:0004333">
    <property type="term" value="F:fumarate hydratase activity"/>
    <property type="evidence" value="ECO:0007669"/>
    <property type="project" value="UniProtKB-UniRule"/>
</dbReference>
<dbReference type="GO" id="GO:0006106">
    <property type="term" value="P:fumarate metabolic process"/>
    <property type="evidence" value="ECO:0007669"/>
    <property type="project" value="InterPro"/>
</dbReference>
<dbReference type="GO" id="GO:0006108">
    <property type="term" value="P:malate metabolic process"/>
    <property type="evidence" value="ECO:0007669"/>
    <property type="project" value="TreeGrafter"/>
</dbReference>
<dbReference type="GO" id="GO:0006099">
    <property type="term" value="P:tricarboxylic acid cycle"/>
    <property type="evidence" value="ECO:0007669"/>
    <property type="project" value="UniProtKB-UniRule"/>
</dbReference>
<dbReference type="CDD" id="cd01362">
    <property type="entry name" value="Fumarase_classII"/>
    <property type="match status" value="1"/>
</dbReference>
<dbReference type="FunFam" id="1.10.40.30:FF:000002">
    <property type="entry name" value="Fumarate hydratase class II"/>
    <property type="match status" value="1"/>
</dbReference>
<dbReference type="FunFam" id="1.10.275.10:FF:000001">
    <property type="entry name" value="Fumarate hydratase, mitochondrial"/>
    <property type="match status" value="1"/>
</dbReference>
<dbReference type="FunFam" id="1.20.200.10:FF:000001">
    <property type="entry name" value="Fumarate hydratase, mitochondrial"/>
    <property type="match status" value="1"/>
</dbReference>
<dbReference type="Gene3D" id="1.10.40.30">
    <property type="entry name" value="Fumarase/aspartase (C-terminal domain)"/>
    <property type="match status" value="1"/>
</dbReference>
<dbReference type="Gene3D" id="1.20.200.10">
    <property type="entry name" value="Fumarase/aspartase (Central domain)"/>
    <property type="match status" value="1"/>
</dbReference>
<dbReference type="Gene3D" id="1.10.275.10">
    <property type="entry name" value="Fumarase/aspartase (N-terminal domain)"/>
    <property type="match status" value="1"/>
</dbReference>
<dbReference type="HAMAP" id="MF_00743">
    <property type="entry name" value="FumaraseC"/>
    <property type="match status" value="1"/>
</dbReference>
<dbReference type="InterPro" id="IPR005677">
    <property type="entry name" value="Fum_hydII"/>
</dbReference>
<dbReference type="InterPro" id="IPR024083">
    <property type="entry name" value="Fumarase/histidase_N"/>
</dbReference>
<dbReference type="InterPro" id="IPR018951">
    <property type="entry name" value="Fumarase_C_C"/>
</dbReference>
<dbReference type="InterPro" id="IPR020557">
    <property type="entry name" value="Fumarate_lyase_CS"/>
</dbReference>
<dbReference type="InterPro" id="IPR000362">
    <property type="entry name" value="Fumarate_lyase_fam"/>
</dbReference>
<dbReference type="InterPro" id="IPR022761">
    <property type="entry name" value="Fumarate_lyase_N"/>
</dbReference>
<dbReference type="InterPro" id="IPR008948">
    <property type="entry name" value="L-Aspartase-like"/>
</dbReference>
<dbReference type="NCBIfam" id="TIGR00979">
    <property type="entry name" value="fumC_II"/>
    <property type="match status" value="1"/>
</dbReference>
<dbReference type="NCBIfam" id="NF008909">
    <property type="entry name" value="PRK12273.1"/>
    <property type="match status" value="1"/>
</dbReference>
<dbReference type="PANTHER" id="PTHR11444">
    <property type="entry name" value="ASPARTATEAMMONIA/ARGININOSUCCINATE/ADENYLOSUCCINATE LYASE"/>
    <property type="match status" value="1"/>
</dbReference>
<dbReference type="PANTHER" id="PTHR11444:SF1">
    <property type="entry name" value="FUMARATE HYDRATASE, MITOCHONDRIAL"/>
    <property type="match status" value="1"/>
</dbReference>
<dbReference type="Pfam" id="PF10415">
    <property type="entry name" value="FumaraseC_C"/>
    <property type="match status" value="1"/>
</dbReference>
<dbReference type="Pfam" id="PF00206">
    <property type="entry name" value="Lyase_1"/>
    <property type="match status" value="1"/>
</dbReference>
<dbReference type="PRINTS" id="PR00145">
    <property type="entry name" value="ARGSUCLYASE"/>
</dbReference>
<dbReference type="PRINTS" id="PR00149">
    <property type="entry name" value="FUMRATELYASE"/>
</dbReference>
<dbReference type="SUPFAM" id="SSF48557">
    <property type="entry name" value="L-aspartase-like"/>
    <property type="match status" value="1"/>
</dbReference>
<dbReference type="PROSITE" id="PS00163">
    <property type="entry name" value="FUMARATE_LYASES"/>
    <property type="match status" value="1"/>
</dbReference>
<organism>
    <name type="scientific">Leptospira interrogans serogroup Icterohaemorrhagiae serovar copenhageni (strain Fiocruz L1-130)</name>
    <dbReference type="NCBI Taxonomy" id="267671"/>
    <lineage>
        <taxon>Bacteria</taxon>
        <taxon>Pseudomonadati</taxon>
        <taxon>Spirochaetota</taxon>
        <taxon>Spirochaetia</taxon>
        <taxon>Leptospirales</taxon>
        <taxon>Leptospiraceae</taxon>
        <taxon>Leptospira</taxon>
    </lineage>
</organism>